<proteinExistence type="inferred from homology"/>
<organism>
    <name type="scientific">Phocaeicola vulgatus (strain ATCC 8482 / DSM 1447 / JCM 5826 / CCUG 4940 / NBRC 14291 / NCTC 11154)</name>
    <name type="common">Bacteroides vulgatus</name>
    <dbReference type="NCBI Taxonomy" id="435590"/>
    <lineage>
        <taxon>Bacteria</taxon>
        <taxon>Pseudomonadati</taxon>
        <taxon>Bacteroidota</taxon>
        <taxon>Bacteroidia</taxon>
        <taxon>Bacteroidales</taxon>
        <taxon>Bacteroidaceae</taxon>
        <taxon>Phocaeicola</taxon>
    </lineage>
</organism>
<protein>
    <recommendedName>
        <fullName>Dihydroorotate dehydrogenase B (NAD(+)), catalytic subunit</fullName>
        <shortName>DHOD B</shortName>
        <shortName>DHODase B</shortName>
        <shortName>DHOdehase B</shortName>
        <ecNumber>1.3.1.14</ecNumber>
    </recommendedName>
    <alternativeName>
        <fullName>Dihydroorotate oxidase B</fullName>
    </alternativeName>
    <alternativeName>
        <fullName>Orotate reductase (NADH)</fullName>
    </alternativeName>
</protein>
<sequence>MADLSVNIGDLKLCNPVMTASGTFGYGKEFEDFVDLEKIGGIIVKGTTLHHREGNPYPRMAETPMGMLNAVGLQNKGVDYFVEHIYPQIRDIHTNMIVNVSGSAVEDYVKTAEIINDLDHIPAIELNISCPNVKQGGMAFGVSACGCSEVVKAVRNVYKKTLIVKLSPNVTDITEIARAAEASGADSVSLINTLLGMAVDAEKRRPVLSTITGGMSGAAVKPIALRMVWQVAKAVNIPVIGLGGIMGWKDAVEFMLAGATAIQIGTANFIDPAITVKVSEGINDYLERHGYTSVKDIIGALEV</sequence>
<reference key="1">
    <citation type="journal article" date="2007" name="PLoS Biol.">
        <title>Evolution of symbiotic bacteria in the distal human intestine.</title>
        <authorList>
            <person name="Xu J."/>
            <person name="Mahowald M.A."/>
            <person name="Ley R.E."/>
            <person name="Lozupone C.A."/>
            <person name="Hamady M."/>
            <person name="Martens E.C."/>
            <person name="Henrissat B."/>
            <person name="Coutinho P.M."/>
            <person name="Minx P."/>
            <person name="Latreille P."/>
            <person name="Cordum H."/>
            <person name="Van Brunt A."/>
            <person name="Kim K."/>
            <person name="Fulton R.S."/>
            <person name="Fulton L.A."/>
            <person name="Clifton S.W."/>
            <person name="Wilson R.K."/>
            <person name="Knight R.D."/>
            <person name="Gordon J.I."/>
        </authorList>
    </citation>
    <scope>NUCLEOTIDE SEQUENCE [LARGE SCALE GENOMIC DNA]</scope>
    <source>
        <strain>ATCC 8482 / DSM 1447 / JCM 5826 / CCUG 4940 / NBRC 14291 / NCTC 11154</strain>
    </source>
</reference>
<comment type="function">
    <text evidence="1">Catalyzes the conversion of dihydroorotate to orotate with NAD(+) as electron acceptor.</text>
</comment>
<comment type="catalytic activity">
    <reaction>
        <text>(S)-dihydroorotate + NAD(+) = orotate + NADH + H(+)</text>
        <dbReference type="Rhea" id="RHEA:13513"/>
        <dbReference type="ChEBI" id="CHEBI:15378"/>
        <dbReference type="ChEBI" id="CHEBI:30839"/>
        <dbReference type="ChEBI" id="CHEBI:30864"/>
        <dbReference type="ChEBI" id="CHEBI:57540"/>
        <dbReference type="ChEBI" id="CHEBI:57945"/>
        <dbReference type="EC" id="1.3.1.14"/>
    </reaction>
</comment>
<comment type="cofactor">
    <cofactor evidence="1">
        <name>FMN</name>
        <dbReference type="ChEBI" id="CHEBI:58210"/>
    </cofactor>
    <text evidence="1">Binds 1 FMN per subunit.</text>
</comment>
<comment type="pathway">
    <text>Pyrimidine metabolism; UMP biosynthesis via de novo pathway; orotate from (S)-dihydroorotate (NAD(+) route): step 1/1.</text>
</comment>
<comment type="subunit">
    <text evidence="1">Heterotetramer of 2 PyrK and 2 PyrD type B subunits.</text>
</comment>
<comment type="subcellular location">
    <subcellularLocation>
        <location evidence="1">Cytoplasm</location>
    </subcellularLocation>
</comment>
<comment type="similarity">
    <text evidence="2">Belongs to the dihydroorotate dehydrogenase family. Type 1 subfamily.</text>
</comment>
<evidence type="ECO:0000250" key="1"/>
<evidence type="ECO:0000305" key="2"/>
<dbReference type="EC" id="1.3.1.14"/>
<dbReference type="EMBL" id="CP000139">
    <property type="protein sequence ID" value="ABR40935.1"/>
    <property type="molecule type" value="Genomic_DNA"/>
</dbReference>
<dbReference type="RefSeq" id="WP_007843008.1">
    <property type="nucleotide sequence ID" value="NZ_CAXUIZ010000039.1"/>
</dbReference>
<dbReference type="SMR" id="A6L5H1"/>
<dbReference type="STRING" id="435590.BVU_3309"/>
<dbReference type="PaxDb" id="435590-BVU_3309"/>
<dbReference type="GeneID" id="5304270"/>
<dbReference type="KEGG" id="bvu:BVU_3309"/>
<dbReference type="eggNOG" id="COG0167">
    <property type="taxonomic scope" value="Bacteria"/>
</dbReference>
<dbReference type="HOGENOM" id="CLU_042042_0_0_10"/>
<dbReference type="BioCyc" id="BVUL435590:G1G59-3431-MONOMER"/>
<dbReference type="UniPathway" id="UPA00070">
    <property type="reaction ID" value="UER00945"/>
</dbReference>
<dbReference type="Proteomes" id="UP000002861">
    <property type="component" value="Chromosome"/>
</dbReference>
<dbReference type="GO" id="GO:0005737">
    <property type="term" value="C:cytoplasm"/>
    <property type="evidence" value="ECO:0007669"/>
    <property type="project" value="UniProtKB-SubCell"/>
</dbReference>
<dbReference type="GO" id="GO:0004589">
    <property type="term" value="F:dihydroorotate dehydrogenase (NAD+) activity"/>
    <property type="evidence" value="ECO:0007669"/>
    <property type="project" value="UniProtKB-EC"/>
</dbReference>
<dbReference type="GO" id="GO:0006207">
    <property type="term" value="P:'de novo' pyrimidine nucleobase biosynthetic process"/>
    <property type="evidence" value="ECO:0007669"/>
    <property type="project" value="InterPro"/>
</dbReference>
<dbReference type="GO" id="GO:0044205">
    <property type="term" value="P:'de novo' UMP biosynthetic process"/>
    <property type="evidence" value="ECO:0007669"/>
    <property type="project" value="UniProtKB-UniRule"/>
</dbReference>
<dbReference type="CDD" id="cd04740">
    <property type="entry name" value="DHOD_1B_like"/>
    <property type="match status" value="1"/>
</dbReference>
<dbReference type="FunFam" id="3.20.20.70:FF:000069">
    <property type="entry name" value="Dihydroorotate dehydrogenase"/>
    <property type="match status" value="1"/>
</dbReference>
<dbReference type="Gene3D" id="3.20.20.70">
    <property type="entry name" value="Aldolase class I"/>
    <property type="match status" value="1"/>
</dbReference>
<dbReference type="HAMAP" id="MF_00224">
    <property type="entry name" value="DHO_dh_type1"/>
    <property type="match status" value="1"/>
</dbReference>
<dbReference type="InterPro" id="IPR013785">
    <property type="entry name" value="Aldolase_TIM"/>
</dbReference>
<dbReference type="InterPro" id="IPR050074">
    <property type="entry name" value="DHO_dehydrogenase"/>
</dbReference>
<dbReference type="InterPro" id="IPR033888">
    <property type="entry name" value="DHOD_1B"/>
</dbReference>
<dbReference type="InterPro" id="IPR024920">
    <property type="entry name" value="Dihydroorotate_DH_1"/>
</dbReference>
<dbReference type="InterPro" id="IPR012135">
    <property type="entry name" value="Dihydroorotate_DH_1_2"/>
</dbReference>
<dbReference type="InterPro" id="IPR005720">
    <property type="entry name" value="Dihydroorotate_DH_cat"/>
</dbReference>
<dbReference type="InterPro" id="IPR001295">
    <property type="entry name" value="Dihydroorotate_DH_CS"/>
</dbReference>
<dbReference type="InterPro" id="IPR049622">
    <property type="entry name" value="Dihydroorotate_DH_I"/>
</dbReference>
<dbReference type="NCBIfam" id="NF005574">
    <property type="entry name" value="PRK07259.1"/>
    <property type="match status" value="1"/>
</dbReference>
<dbReference type="NCBIfam" id="TIGR01037">
    <property type="entry name" value="pyrD_sub1_fam"/>
    <property type="match status" value="1"/>
</dbReference>
<dbReference type="PANTHER" id="PTHR48109:SF1">
    <property type="entry name" value="DIHYDROOROTATE DEHYDROGENASE (FUMARATE)"/>
    <property type="match status" value="1"/>
</dbReference>
<dbReference type="PANTHER" id="PTHR48109">
    <property type="entry name" value="DIHYDROOROTATE DEHYDROGENASE (QUINONE), MITOCHONDRIAL-RELATED"/>
    <property type="match status" value="1"/>
</dbReference>
<dbReference type="Pfam" id="PF01180">
    <property type="entry name" value="DHO_dh"/>
    <property type="match status" value="1"/>
</dbReference>
<dbReference type="PIRSF" id="PIRSF000164">
    <property type="entry name" value="DHO_oxidase"/>
    <property type="match status" value="1"/>
</dbReference>
<dbReference type="SUPFAM" id="SSF51395">
    <property type="entry name" value="FMN-linked oxidoreductases"/>
    <property type="match status" value="1"/>
</dbReference>
<dbReference type="PROSITE" id="PS00911">
    <property type="entry name" value="DHODEHASE_1"/>
    <property type="match status" value="1"/>
</dbReference>
<dbReference type="PROSITE" id="PS00912">
    <property type="entry name" value="DHODEHASE_2"/>
    <property type="match status" value="1"/>
</dbReference>
<gene>
    <name type="primary">pyrD</name>
    <name type="ordered locus">BVU_3309</name>
</gene>
<keyword id="KW-0963">Cytoplasm</keyword>
<keyword id="KW-0285">Flavoprotein</keyword>
<keyword id="KW-0288">FMN</keyword>
<keyword id="KW-0520">NAD</keyword>
<keyword id="KW-0560">Oxidoreductase</keyword>
<keyword id="KW-0665">Pyrimidine biosynthesis</keyword>
<name>PYRDB_PHOV8</name>
<accession>A6L5H1</accession>
<feature type="chain" id="PRO_1000100216" description="Dihydroorotate dehydrogenase B (NAD(+)), catalytic subunit">
    <location>
        <begin position="1"/>
        <end position="303"/>
    </location>
</feature>
<feature type="active site" description="Nucleophile">
    <location>
        <position position="130"/>
    </location>
</feature>
<feature type="binding site" evidence="1">
    <location>
        <position position="21"/>
    </location>
    <ligand>
        <name>FMN</name>
        <dbReference type="ChEBI" id="CHEBI:58210"/>
    </ligand>
</feature>
<feature type="binding site" evidence="1">
    <location>
        <begin position="45"/>
        <end position="46"/>
    </location>
    <ligand>
        <name>FMN</name>
        <dbReference type="ChEBI" id="CHEBI:58210"/>
    </ligand>
</feature>
<feature type="binding site" evidence="1">
    <location>
        <position position="45"/>
    </location>
    <ligand>
        <name>substrate</name>
    </ligand>
</feature>
<feature type="binding site" evidence="1">
    <location>
        <begin position="69"/>
        <end position="73"/>
    </location>
    <ligand>
        <name>substrate</name>
    </ligand>
</feature>
<feature type="binding site" evidence="1">
    <location>
        <position position="99"/>
    </location>
    <ligand>
        <name>FMN</name>
        <dbReference type="ChEBI" id="CHEBI:58210"/>
    </ligand>
</feature>
<feature type="binding site" evidence="1">
    <location>
        <position position="127"/>
    </location>
    <ligand>
        <name>FMN</name>
        <dbReference type="ChEBI" id="CHEBI:58210"/>
    </ligand>
</feature>
<feature type="binding site" evidence="1">
    <location>
        <position position="127"/>
    </location>
    <ligand>
        <name>substrate</name>
    </ligand>
</feature>
<feature type="binding site" evidence="1">
    <location>
        <position position="165"/>
    </location>
    <ligand>
        <name>FMN</name>
        <dbReference type="ChEBI" id="CHEBI:58210"/>
    </ligand>
</feature>
<feature type="binding site" evidence="1">
    <location>
        <position position="191"/>
    </location>
    <ligand>
        <name>FMN</name>
        <dbReference type="ChEBI" id="CHEBI:58210"/>
    </ligand>
</feature>
<feature type="binding site" evidence="1">
    <location>
        <begin position="192"/>
        <end position="193"/>
    </location>
    <ligand>
        <name>substrate</name>
    </ligand>
</feature>
<feature type="binding site" evidence="1">
    <location>
        <position position="217"/>
    </location>
    <ligand>
        <name>FMN</name>
        <dbReference type="ChEBI" id="CHEBI:58210"/>
    </ligand>
</feature>
<feature type="binding site" evidence="1">
    <location>
        <begin position="243"/>
        <end position="244"/>
    </location>
    <ligand>
        <name>FMN</name>
        <dbReference type="ChEBI" id="CHEBI:58210"/>
    </ligand>
</feature>
<feature type="binding site" evidence="1">
    <location>
        <begin position="265"/>
        <end position="266"/>
    </location>
    <ligand>
        <name>FMN</name>
        <dbReference type="ChEBI" id="CHEBI:58210"/>
    </ligand>
</feature>